<keyword id="KW-0004">4Fe-4S</keyword>
<keyword id="KW-0963">Cytoplasm</keyword>
<keyword id="KW-0408">Iron</keyword>
<keyword id="KW-0411">Iron-sulfur</keyword>
<keyword id="KW-0479">Metal-binding</keyword>
<keyword id="KW-0949">S-adenosyl-L-methionine</keyword>
<keyword id="KW-0808">Transferase</keyword>
<name>RIMO_CAMFF</name>
<organism>
    <name type="scientific">Campylobacter fetus subsp. fetus (strain 82-40)</name>
    <dbReference type="NCBI Taxonomy" id="360106"/>
    <lineage>
        <taxon>Bacteria</taxon>
        <taxon>Pseudomonadati</taxon>
        <taxon>Campylobacterota</taxon>
        <taxon>Epsilonproteobacteria</taxon>
        <taxon>Campylobacterales</taxon>
        <taxon>Campylobacteraceae</taxon>
        <taxon>Campylobacter</taxon>
    </lineage>
</organism>
<reference key="1">
    <citation type="submission" date="2006-11" db="EMBL/GenBank/DDBJ databases">
        <title>Sequence of Campylobacter fetus subsp. fetus 82-40.</title>
        <authorList>
            <person name="Fouts D.E."/>
            <person name="Nelson K.E."/>
        </authorList>
    </citation>
    <scope>NUCLEOTIDE SEQUENCE [LARGE SCALE GENOMIC DNA]</scope>
    <source>
        <strain>82-40</strain>
    </source>
</reference>
<accession>A0RQM9</accession>
<evidence type="ECO:0000255" key="1">
    <source>
        <dbReference type="HAMAP-Rule" id="MF_01865"/>
    </source>
</evidence>
<evidence type="ECO:0000255" key="2">
    <source>
        <dbReference type="PROSITE-ProRule" id="PRU01266"/>
    </source>
</evidence>
<dbReference type="EC" id="2.8.4.4" evidence="1"/>
<dbReference type="EMBL" id="CP000487">
    <property type="protein sequence ID" value="ABK82948.1"/>
    <property type="molecule type" value="Genomic_DNA"/>
</dbReference>
<dbReference type="RefSeq" id="WP_011732175.1">
    <property type="nucleotide sequence ID" value="NC_008599.1"/>
</dbReference>
<dbReference type="SMR" id="A0RQM9"/>
<dbReference type="GeneID" id="61065187"/>
<dbReference type="KEGG" id="cff:CFF8240_1371"/>
<dbReference type="PATRIC" id="fig|360106.6.peg.1334"/>
<dbReference type="eggNOG" id="COG0621">
    <property type="taxonomic scope" value="Bacteria"/>
</dbReference>
<dbReference type="HOGENOM" id="CLU_018697_0_1_7"/>
<dbReference type="Proteomes" id="UP000000760">
    <property type="component" value="Chromosome"/>
</dbReference>
<dbReference type="GO" id="GO:0005829">
    <property type="term" value="C:cytosol"/>
    <property type="evidence" value="ECO:0007669"/>
    <property type="project" value="TreeGrafter"/>
</dbReference>
<dbReference type="GO" id="GO:0051539">
    <property type="term" value="F:4 iron, 4 sulfur cluster binding"/>
    <property type="evidence" value="ECO:0007669"/>
    <property type="project" value="UniProtKB-UniRule"/>
</dbReference>
<dbReference type="GO" id="GO:0035599">
    <property type="term" value="F:aspartic acid methylthiotransferase activity"/>
    <property type="evidence" value="ECO:0007669"/>
    <property type="project" value="TreeGrafter"/>
</dbReference>
<dbReference type="GO" id="GO:0046872">
    <property type="term" value="F:metal ion binding"/>
    <property type="evidence" value="ECO:0007669"/>
    <property type="project" value="UniProtKB-KW"/>
</dbReference>
<dbReference type="GO" id="GO:0103039">
    <property type="term" value="F:protein methylthiotransferase activity"/>
    <property type="evidence" value="ECO:0007669"/>
    <property type="project" value="UniProtKB-EC"/>
</dbReference>
<dbReference type="GO" id="GO:0006400">
    <property type="term" value="P:tRNA modification"/>
    <property type="evidence" value="ECO:0007669"/>
    <property type="project" value="InterPro"/>
</dbReference>
<dbReference type="CDD" id="cd01335">
    <property type="entry name" value="Radical_SAM"/>
    <property type="match status" value="1"/>
</dbReference>
<dbReference type="Gene3D" id="3.40.50.12160">
    <property type="entry name" value="Methylthiotransferase, N-terminal domain"/>
    <property type="match status" value="1"/>
</dbReference>
<dbReference type="Gene3D" id="3.80.30.20">
    <property type="entry name" value="tm_1862 like domain"/>
    <property type="match status" value="1"/>
</dbReference>
<dbReference type="HAMAP" id="MF_01865">
    <property type="entry name" value="MTTase_RimO"/>
    <property type="match status" value="1"/>
</dbReference>
<dbReference type="InterPro" id="IPR006638">
    <property type="entry name" value="Elp3/MiaA/NifB-like_rSAM"/>
</dbReference>
<dbReference type="InterPro" id="IPR005839">
    <property type="entry name" value="Methylthiotransferase"/>
</dbReference>
<dbReference type="InterPro" id="IPR020612">
    <property type="entry name" value="Methylthiotransferase_CS"/>
</dbReference>
<dbReference type="InterPro" id="IPR013848">
    <property type="entry name" value="Methylthiotransferase_N"/>
</dbReference>
<dbReference type="InterPro" id="IPR038135">
    <property type="entry name" value="Methylthiotransferase_N_sf"/>
</dbReference>
<dbReference type="InterPro" id="IPR005840">
    <property type="entry name" value="Ribosomal_uS12_MeSTrfase_RimO"/>
</dbReference>
<dbReference type="InterPro" id="IPR007197">
    <property type="entry name" value="rSAM"/>
</dbReference>
<dbReference type="InterPro" id="IPR023404">
    <property type="entry name" value="rSAM_horseshoe"/>
</dbReference>
<dbReference type="InterPro" id="IPR002792">
    <property type="entry name" value="TRAM_dom"/>
</dbReference>
<dbReference type="NCBIfam" id="TIGR01125">
    <property type="entry name" value="30S ribosomal protein S12 methylthiotransferase RimO"/>
    <property type="match status" value="1"/>
</dbReference>
<dbReference type="NCBIfam" id="TIGR00089">
    <property type="entry name" value="MiaB/RimO family radical SAM methylthiotransferase"/>
    <property type="match status" value="1"/>
</dbReference>
<dbReference type="PANTHER" id="PTHR43837">
    <property type="entry name" value="RIBOSOMAL PROTEIN S12 METHYLTHIOTRANSFERASE RIMO"/>
    <property type="match status" value="1"/>
</dbReference>
<dbReference type="PANTHER" id="PTHR43837:SF1">
    <property type="entry name" value="RIBOSOMAL PROTEIN US12 METHYLTHIOTRANSFERASE RIMO"/>
    <property type="match status" value="1"/>
</dbReference>
<dbReference type="Pfam" id="PF04055">
    <property type="entry name" value="Radical_SAM"/>
    <property type="match status" value="1"/>
</dbReference>
<dbReference type="Pfam" id="PF00919">
    <property type="entry name" value="UPF0004"/>
    <property type="match status" value="1"/>
</dbReference>
<dbReference type="SFLD" id="SFLDG01082">
    <property type="entry name" value="B12-binding_domain_containing"/>
    <property type="match status" value="1"/>
</dbReference>
<dbReference type="SFLD" id="SFLDS00029">
    <property type="entry name" value="Radical_SAM"/>
    <property type="match status" value="1"/>
</dbReference>
<dbReference type="SFLD" id="SFLDF00274">
    <property type="entry name" value="ribosomal_protein_S12_methylth"/>
    <property type="match status" value="1"/>
</dbReference>
<dbReference type="SMART" id="SM00729">
    <property type="entry name" value="Elp3"/>
    <property type="match status" value="1"/>
</dbReference>
<dbReference type="SUPFAM" id="SSF102114">
    <property type="entry name" value="Radical SAM enzymes"/>
    <property type="match status" value="1"/>
</dbReference>
<dbReference type="PROSITE" id="PS51449">
    <property type="entry name" value="MTTASE_N"/>
    <property type="match status" value="1"/>
</dbReference>
<dbReference type="PROSITE" id="PS01278">
    <property type="entry name" value="MTTASE_RADICAL"/>
    <property type="match status" value="1"/>
</dbReference>
<dbReference type="PROSITE" id="PS51918">
    <property type="entry name" value="RADICAL_SAM"/>
    <property type="match status" value="1"/>
</dbReference>
<dbReference type="PROSITE" id="PS50926">
    <property type="entry name" value="TRAM"/>
    <property type="match status" value="1"/>
</dbReference>
<sequence>MPNLYLVSLGCNKNLVDSEIMLGRLSSYNIVDKPNNADVMIVNTCGFIESAKEESVRTILELASYKKENSVLVVTGCLMQRYRDELMKELPEVDIFTGVGDYASIDEMILKKQNLFSPGVYLQKSDTKRVITGSSYHAYIKIAEGCNQKCSFCAIPTFKGKLKSRDINSIIKEVKELTKDGYSDFSFIAQDTSSFLRDAGINDGLIKLIDEVEKIEAVKSARILYLYPTTASMGLIDKIIASPKFVNYFDMPIQHINDDMLKIMRRGSSKERLKELLTKMRVAPKSFLRTGIIIGHPGETGERFDELCDFLTEFKFDRISAFAYSKEEGTLAYEMEQIPSKTITKRLNTIEKIIKKQIEGSFKSLVGEVIKVQINGSSSEGEMFFGAKSIIWDREIDGEILINDTQIKDPKVGEIYDCKINEFVKDKLIGEIICNS</sequence>
<proteinExistence type="inferred from homology"/>
<protein>
    <recommendedName>
        <fullName evidence="1">Ribosomal protein uS12 methylthiotransferase RimO</fullName>
        <shortName evidence="1">uS12 MTTase</shortName>
        <shortName evidence="1">uS12 methylthiotransferase</shortName>
        <ecNumber evidence="1">2.8.4.4</ecNumber>
    </recommendedName>
    <alternativeName>
        <fullName evidence="1">Ribosomal protein uS12 (aspartate-C(3))-methylthiotransferase</fullName>
    </alternativeName>
    <alternativeName>
        <fullName evidence="1">Ribosome maturation factor RimO</fullName>
    </alternativeName>
</protein>
<feature type="chain" id="PRO_0000374751" description="Ribosomal protein uS12 methylthiotransferase RimO">
    <location>
        <begin position="1"/>
        <end position="436"/>
    </location>
</feature>
<feature type="domain" description="MTTase N-terminal" evidence="1">
    <location>
        <begin position="2"/>
        <end position="114"/>
    </location>
</feature>
<feature type="domain" description="Radical SAM core" evidence="2">
    <location>
        <begin position="132"/>
        <end position="363"/>
    </location>
</feature>
<feature type="domain" description="TRAM" evidence="1">
    <location>
        <begin position="363"/>
        <end position="434"/>
    </location>
</feature>
<feature type="binding site" evidence="1">
    <location>
        <position position="11"/>
    </location>
    <ligand>
        <name>[4Fe-4S] cluster</name>
        <dbReference type="ChEBI" id="CHEBI:49883"/>
        <label>1</label>
    </ligand>
</feature>
<feature type="binding site" evidence="1">
    <location>
        <position position="45"/>
    </location>
    <ligand>
        <name>[4Fe-4S] cluster</name>
        <dbReference type="ChEBI" id="CHEBI:49883"/>
        <label>1</label>
    </ligand>
</feature>
<feature type="binding site" evidence="1">
    <location>
        <position position="77"/>
    </location>
    <ligand>
        <name>[4Fe-4S] cluster</name>
        <dbReference type="ChEBI" id="CHEBI:49883"/>
        <label>1</label>
    </ligand>
</feature>
<feature type="binding site" evidence="1">
    <location>
        <position position="146"/>
    </location>
    <ligand>
        <name>[4Fe-4S] cluster</name>
        <dbReference type="ChEBI" id="CHEBI:49883"/>
        <label>2</label>
        <note>4Fe-4S-S-AdoMet</note>
    </ligand>
</feature>
<feature type="binding site" evidence="1">
    <location>
        <position position="150"/>
    </location>
    <ligand>
        <name>[4Fe-4S] cluster</name>
        <dbReference type="ChEBI" id="CHEBI:49883"/>
        <label>2</label>
        <note>4Fe-4S-S-AdoMet</note>
    </ligand>
</feature>
<feature type="binding site" evidence="1">
    <location>
        <position position="153"/>
    </location>
    <ligand>
        <name>[4Fe-4S] cluster</name>
        <dbReference type="ChEBI" id="CHEBI:49883"/>
        <label>2</label>
        <note>4Fe-4S-S-AdoMet</note>
    </ligand>
</feature>
<comment type="function">
    <text evidence="1">Catalyzes the methylthiolation of an aspartic acid residue of ribosomal protein uS12.</text>
</comment>
<comment type="catalytic activity">
    <reaction evidence="1">
        <text>L-aspartate(89)-[ribosomal protein uS12]-hydrogen + (sulfur carrier)-SH + AH2 + 2 S-adenosyl-L-methionine = 3-methylsulfanyl-L-aspartate(89)-[ribosomal protein uS12]-hydrogen + (sulfur carrier)-H + 5'-deoxyadenosine + L-methionine + A + S-adenosyl-L-homocysteine + 2 H(+)</text>
        <dbReference type="Rhea" id="RHEA:37087"/>
        <dbReference type="Rhea" id="RHEA-COMP:10460"/>
        <dbReference type="Rhea" id="RHEA-COMP:10461"/>
        <dbReference type="Rhea" id="RHEA-COMP:14737"/>
        <dbReference type="Rhea" id="RHEA-COMP:14739"/>
        <dbReference type="ChEBI" id="CHEBI:13193"/>
        <dbReference type="ChEBI" id="CHEBI:15378"/>
        <dbReference type="ChEBI" id="CHEBI:17319"/>
        <dbReference type="ChEBI" id="CHEBI:17499"/>
        <dbReference type="ChEBI" id="CHEBI:29917"/>
        <dbReference type="ChEBI" id="CHEBI:29961"/>
        <dbReference type="ChEBI" id="CHEBI:57844"/>
        <dbReference type="ChEBI" id="CHEBI:57856"/>
        <dbReference type="ChEBI" id="CHEBI:59789"/>
        <dbReference type="ChEBI" id="CHEBI:64428"/>
        <dbReference type="ChEBI" id="CHEBI:73599"/>
        <dbReference type="EC" id="2.8.4.4"/>
    </reaction>
</comment>
<comment type="cofactor">
    <cofactor evidence="1">
        <name>[4Fe-4S] cluster</name>
        <dbReference type="ChEBI" id="CHEBI:49883"/>
    </cofactor>
    <text evidence="1">Binds 2 [4Fe-4S] clusters. One cluster is coordinated with 3 cysteines and an exchangeable S-adenosyl-L-methionine.</text>
</comment>
<comment type="subcellular location">
    <subcellularLocation>
        <location evidence="1">Cytoplasm</location>
    </subcellularLocation>
</comment>
<comment type="similarity">
    <text evidence="1">Belongs to the methylthiotransferase family. RimO subfamily.</text>
</comment>
<gene>
    <name evidence="1" type="primary">rimO</name>
    <name type="ordered locus">CFF8240_1371</name>
</gene>